<proteinExistence type="inferred from homology"/>
<protein>
    <recommendedName>
        <fullName evidence="1">ATP synthase subunit delta</fullName>
    </recommendedName>
    <alternativeName>
        <fullName evidence="1">ATP synthase F(1) sector subunit delta</fullName>
    </alternativeName>
    <alternativeName>
        <fullName evidence="1">F-type ATPase subunit delta</fullName>
        <shortName evidence="1">F-ATPase subunit delta</shortName>
    </alternativeName>
</protein>
<comment type="function">
    <text evidence="1">F(1)F(0) ATP synthase produces ATP from ADP in the presence of a proton or sodium gradient. F-type ATPases consist of two structural domains, F(1) containing the extramembraneous catalytic core and F(0) containing the membrane proton channel, linked together by a central stalk and a peripheral stalk. During catalysis, ATP synthesis in the catalytic domain of F(1) is coupled via a rotary mechanism of the central stalk subunits to proton translocation.</text>
</comment>
<comment type="function">
    <text evidence="1">This protein is part of the stalk that links CF(0) to CF(1). It either transmits conformational changes from CF(0) to CF(1) or is implicated in proton conduction.</text>
</comment>
<comment type="subunit">
    <text evidence="1">F-type ATPases have 2 components, F(1) - the catalytic core - and F(0) - the membrane proton channel. F(1) has five subunits: alpha(3), beta(3), gamma(1), delta(1), epsilon(1). F(0) has three main subunits: a(1), b(2) and c(10-14). The alpha and beta chains form an alternating ring which encloses part of the gamma chain. F(1) is attached to F(0) by a central stalk formed by the gamma and epsilon chains, while a peripheral stalk is formed by the delta and b chains.</text>
</comment>
<comment type="subcellular location">
    <subcellularLocation>
        <location evidence="1">Cell inner membrane</location>
        <topology evidence="1">Peripheral membrane protein</topology>
    </subcellularLocation>
</comment>
<comment type="similarity">
    <text evidence="1">Belongs to the ATPase delta chain family.</text>
</comment>
<comment type="sequence caution" evidence="2">
    <conflict type="erroneous initiation">
        <sequence resource="EMBL-CDS" id="AAU29030"/>
    </conflict>
</comment>
<keyword id="KW-0066">ATP synthesis</keyword>
<keyword id="KW-0997">Cell inner membrane</keyword>
<keyword id="KW-1003">Cell membrane</keyword>
<keyword id="KW-0139">CF(1)</keyword>
<keyword id="KW-0375">Hydrogen ion transport</keyword>
<keyword id="KW-0406">Ion transport</keyword>
<keyword id="KW-0472">Membrane</keyword>
<keyword id="KW-1185">Reference proteome</keyword>
<keyword id="KW-0813">Transport</keyword>
<evidence type="ECO:0000255" key="1">
    <source>
        <dbReference type="HAMAP-Rule" id="MF_01416"/>
    </source>
</evidence>
<evidence type="ECO:0000305" key="2"/>
<reference key="1">
    <citation type="journal article" date="2004" name="Science">
        <title>The genomic sequence of the accidental pathogen Legionella pneumophila.</title>
        <authorList>
            <person name="Chien M."/>
            <person name="Morozova I."/>
            <person name="Shi S."/>
            <person name="Sheng H."/>
            <person name="Chen J."/>
            <person name="Gomez S.M."/>
            <person name="Asamani G."/>
            <person name="Hill K."/>
            <person name="Nuara J."/>
            <person name="Feder M."/>
            <person name="Rineer J."/>
            <person name="Greenberg J.J."/>
            <person name="Steshenko V."/>
            <person name="Park S.H."/>
            <person name="Zhao B."/>
            <person name="Teplitskaya E."/>
            <person name="Edwards J.R."/>
            <person name="Pampou S."/>
            <person name="Georghiou A."/>
            <person name="Chou I.-C."/>
            <person name="Iannuccilli W."/>
            <person name="Ulz M.E."/>
            <person name="Kim D.H."/>
            <person name="Geringer-Sameth A."/>
            <person name="Goldsberry C."/>
            <person name="Morozov P."/>
            <person name="Fischer S.G."/>
            <person name="Segal G."/>
            <person name="Qu X."/>
            <person name="Rzhetsky A."/>
            <person name="Zhang P."/>
            <person name="Cayanis E."/>
            <person name="De Jong P.J."/>
            <person name="Ju J."/>
            <person name="Kalachikov S."/>
            <person name="Shuman H.A."/>
            <person name="Russo J.J."/>
        </authorList>
    </citation>
    <scope>NUCLEOTIDE SEQUENCE [LARGE SCALE GENOMIC DNA]</scope>
    <source>
        <strain>Philadelphia 1 / ATCC 33152 / DSM 7513</strain>
    </source>
</reference>
<dbReference type="EMBL" id="AE017354">
    <property type="protein sequence ID" value="AAU29030.1"/>
    <property type="status" value="ALT_INIT"/>
    <property type="molecule type" value="Genomic_DNA"/>
</dbReference>
<dbReference type="RefSeq" id="WP_016357053.1">
    <property type="nucleotide sequence ID" value="NC_002942.5"/>
</dbReference>
<dbReference type="RefSeq" id="YP_096977.1">
    <property type="nucleotide sequence ID" value="NC_002942.5"/>
</dbReference>
<dbReference type="SMR" id="Q5ZR98"/>
<dbReference type="STRING" id="272624.lpg2985"/>
<dbReference type="PaxDb" id="272624-lpg2985"/>
<dbReference type="KEGG" id="lpn:lpg2985"/>
<dbReference type="PATRIC" id="fig|272624.6.peg.3191"/>
<dbReference type="eggNOG" id="COG0712">
    <property type="taxonomic scope" value="Bacteria"/>
</dbReference>
<dbReference type="HOGENOM" id="CLU_085114_3_0_6"/>
<dbReference type="OrthoDB" id="9816221at2"/>
<dbReference type="Proteomes" id="UP000000609">
    <property type="component" value="Chromosome"/>
</dbReference>
<dbReference type="GO" id="GO:0005886">
    <property type="term" value="C:plasma membrane"/>
    <property type="evidence" value="ECO:0007669"/>
    <property type="project" value="UniProtKB-SubCell"/>
</dbReference>
<dbReference type="GO" id="GO:0045259">
    <property type="term" value="C:proton-transporting ATP synthase complex"/>
    <property type="evidence" value="ECO:0007669"/>
    <property type="project" value="UniProtKB-KW"/>
</dbReference>
<dbReference type="GO" id="GO:0046933">
    <property type="term" value="F:proton-transporting ATP synthase activity, rotational mechanism"/>
    <property type="evidence" value="ECO:0007669"/>
    <property type="project" value="UniProtKB-UniRule"/>
</dbReference>
<dbReference type="Gene3D" id="1.10.520.20">
    <property type="entry name" value="N-terminal domain of the delta subunit of the F1F0-ATP synthase"/>
    <property type="match status" value="1"/>
</dbReference>
<dbReference type="HAMAP" id="MF_01416">
    <property type="entry name" value="ATP_synth_delta_bact"/>
    <property type="match status" value="1"/>
</dbReference>
<dbReference type="InterPro" id="IPR026015">
    <property type="entry name" value="ATP_synth_OSCP/delta_N_sf"/>
</dbReference>
<dbReference type="InterPro" id="IPR020781">
    <property type="entry name" value="ATPase_OSCP/d_CS"/>
</dbReference>
<dbReference type="InterPro" id="IPR000711">
    <property type="entry name" value="ATPase_OSCP/dsu"/>
</dbReference>
<dbReference type="NCBIfam" id="TIGR01145">
    <property type="entry name" value="ATP_synt_delta"/>
    <property type="match status" value="1"/>
</dbReference>
<dbReference type="NCBIfam" id="NF004402">
    <property type="entry name" value="PRK05758.2-2"/>
    <property type="match status" value="1"/>
</dbReference>
<dbReference type="PANTHER" id="PTHR11910">
    <property type="entry name" value="ATP SYNTHASE DELTA CHAIN"/>
    <property type="match status" value="1"/>
</dbReference>
<dbReference type="Pfam" id="PF00213">
    <property type="entry name" value="OSCP"/>
    <property type="match status" value="1"/>
</dbReference>
<dbReference type="PRINTS" id="PR00125">
    <property type="entry name" value="ATPASEDELTA"/>
</dbReference>
<dbReference type="SUPFAM" id="SSF47928">
    <property type="entry name" value="N-terminal domain of the delta subunit of the F1F0-ATP synthase"/>
    <property type="match status" value="1"/>
</dbReference>
<dbReference type="PROSITE" id="PS00389">
    <property type="entry name" value="ATPASE_DELTA"/>
    <property type="match status" value="1"/>
</dbReference>
<sequence length="180" mass="19904">MSDSTTIARPYAKAIFEHALAEKKLSEWSEYLTLLAQVVLTPQATQFIANPASTDEQQIELLIEVCGSKFKKNDALNNLIKLLTTNKRLMLLPEIEALYEVYRAEQEKILEVDVVSYSELTPAQQQRLSESLSQRLSRKVSLKISIDPSLLGGALIRAGDLVIDGSVRGKLNMLGTSLAA</sequence>
<gene>
    <name evidence="1" type="primary">atpH</name>
    <name type="ordered locus">lpg2985</name>
</gene>
<accession>Q5ZR98</accession>
<feature type="chain" id="PRO_0000371019" description="ATP synthase subunit delta">
    <location>
        <begin position="1"/>
        <end position="180"/>
    </location>
</feature>
<name>ATPD_LEGPH</name>
<organism>
    <name type="scientific">Legionella pneumophila subsp. pneumophila (strain Philadelphia 1 / ATCC 33152 / DSM 7513)</name>
    <dbReference type="NCBI Taxonomy" id="272624"/>
    <lineage>
        <taxon>Bacteria</taxon>
        <taxon>Pseudomonadati</taxon>
        <taxon>Pseudomonadota</taxon>
        <taxon>Gammaproteobacteria</taxon>
        <taxon>Legionellales</taxon>
        <taxon>Legionellaceae</taxon>
        <taxon>Legionella</taxon>
    </lineage>
</organism>